<name>RHLB_SHEWM</name>
<sequence>MSETHLSNQKFADFSLNKEIKTALNESGFEFCTPIQALSLPILLQKKDIAGQAQTGTGKTLAFLVATFDHLLSTPVPEGRQLNQPRAMIMAPTRELAIQIAKDATLLAKHTGLKVGIVYGGESYDVQRKVLDKGVDILIGTTGRIIDYVRQGIINLSAIQAVVLDEADRMFDLGFIKDIRFLFRRMPDAKSRLNMLFSATLSMKVQELAYDHMNEPEKVVIAPNEKTSKNIKEEIFYPSMDEKMRLLLSLIEEDWPEKAIVFSNTKHSCENVWSWLEGDGHRVGLLTGDVPQKKRIRILEQFTEGKLDILVATDVAARGLHISDVSHVYNYDLPDDCEDYVHRIGRTGRAGKKGVSVSFACEEYALNLPAIEEYITHSIPVTNYDSEGLLDDIPAPIRVHRKHNNRPQQGRNNSGRPQGRNGNRAGGRNGPRRHDQVRRHS</sequence>
<reference key="1">
    <citation type="submission" date="2008-02" db="EMBL/GenBank/DDBJ databases">
        <title>Complete sequence of Shewanella woodyi ATCC 51908.</title>
        <authorList>
            <consortium name="US DOE Joint Genome Institute"/>
            <person name="Copeland A."/>
            <person name="Lucas S."/>
            <person name="Lapidus A."/>
            <person name="Glavina del Rio T."/>
            <person name="Dalin E."/>
            <person name="Tice H."/>
            <person name="Bruce D."/>
            <person name="Goodwin L."/>
            <person name="Pitluck S."/>
            <person name="Sims D."/>
            <person name="Brettin T."/>
            <person name="Detter J.C."/>
            <person name="Han C."/>
            <person name="Kuske C.R."/>
            <person name="Schmutz J."/>
            <person name="Larimer F."/>
            <person name="Land M."/>
            <person name="Hauser L."/>
            <person name="Kyrpides N."/>
            <person name="Lykidis A."/>
            <person name="Zhao J.-S."/>
            <person name="Richardson P."/>
        </authorList>
    </citation>
    <scope>NUCLEOTIDE SEQUENCE [LARGE SCALE GENOMIC DNA]</scope>
    <source>
        <strain>ATCC 51908 / MS32</strain>
    </source>
</reference>
<dbReference type="EC" id="3.6.4.13" evidence="1"/>
<dbReference type="EMBL" id="CP000961">
    <property type="protein sequence ID" value="ACA84811.1"/>
    <property type="molecule type" value="Genomic_DNA"/>
</dbReference>
<dbReference type="RefSeq" id="WP_012323159.1">
    <property type="nucleotide sequence ID" value="NC_010506.1"/>
</dbReference>
<dbReference type="SMR" id="B1KQF6"/>
<dbReference type="STRING" id="392500.Swoo_0514"/>
<dbReference type="KEGG" id="swd:Swoo_0514"/>
<dbReference type="eggNOG" id="COG0513">
    <property type="taxonomic scope" value="Bacteria"/>
</dbReference>
<dbReference type="HOGENOM" id="CLU_003041_28_3_6"/>
<dbReference type="Proteomes" id="UP000002168">
    <property type="component" value="Chromosome"/>
</dbReference>
<dbReference type="GO" id="GO:0005829">
    <property type="term" value="C:cytosol"/>
    <property type="evidence" value="ECO:0007669"/>
    <property type="project" value="TreeGrafter"/>
</dbReference>
<dbReference type="GO" id="GO:0005524">
    <property type="term" value="F:ATP binding"/>
    <property type="evidence" value="ECO:0007669"/>
    <property type="project" value="UniProtKB-UniRule"/>
</dbReference>
<dbReference type="GO" id="GO:0016887">
    <property type="term" value="F:ATP hydrolysis activity"/>
    <property type="evidence" value="ECO:0007669"/>
    <property type="project" value="RHEA"/>
</dbReference>
<dbReference type="GO" id="GO:0003723">
    <property type="term" value="F:RNA binding"/>
    <property type="evidence" value="ECO:0007669"/>
    <property type="project" value="UniProtKB-UniRule"/>
</dbReference>
<dbReference type="GO" id="GO:0003724">
    <property type="term" value="F:RNA helicase activity"/>
    <property type="evidence" value="ECO:0007669"/>
    <property type="project" value="UniProtKB-UniRule"/>
</dbReference>
<dbReference type="GO" id="GO:0006401">
    <property type="term" value="P:RNA catabolic process"/>
    <property type="evidence" value="ECO:0007669"/>
    <property type="project" value="UniProtKB-UniRule"/>
</dbReference>
<dbReference type="CDD" id="cd00268">
    <property type="entry name" value="DEADc"/>
    <property type="match status" value="1"/>
</dbReference>
<dbReference type="CDD" id="cd18787">
    <property type="entry name" value="SF2_C_DEAD"/>
    <property type="match status" value="1"/>
</dbReference>
<dbReference type="FunFam" id="3.40.50.300:FF:000312">
    <property type="entry name" value="ATP-dependent RNA helicase RhlB"/>
    <property type="match status" value="1"/>
</dbReference>
<dbReference type="Gene3D" id="3.40.50.300">
    <property type="entry name" value="P-loop containing nucleotide triphosphate hydrolases"/>
    <property type="match status" value="2"/>
</dbReference>
<dbReference type="HAMAP" id="MF_00661">
    <property type="entry name" value="DEAD_helicase_RhlB"/>
    <property type="match status" value="1"/>
</dbReference>
<dbReference type="InterPro" id="IPR011545">
    <property type="entry name" value="DEAD/DEAH_box_helicase_dom"/>
</dbReference>
<dbReference type="InterPro" id="IPR050079">
    <property type="entry name" value="DEAD_box_RNA_helicase"/>
</dbReference>
<dbReference type="InterPro" id="IPR014001">
    <property type="entry name" value="Helicase_ATP-bd"/>
</dbReference>
<dbReference type="InterPro" id="IPR001650">
    <property type="entry name" value="Helicase_C-like"/>
</dbReference>
<dbReference type="InterPro" id="IPR027417">
    <property type="entry name" value="P-loop_NTPase"/>
</dbReference>
<dbReference type="InterPro" id="IPR000629">
    <property type="entry name" value="RNA-helicase_DEAD-box_CS"/>
</dbReference>
<dbReference type="InterPro" id="IPR023554">
    <property type="entry name" value="RNA_helicase_ATP-dep_RhlB"/>
</dbReference>
<dbReference type="InterPro" id="IPR014014">
    <property type="entry name" value="RNA_helicase_DEAD_Q_motif"/>
</dbReference>
<dbReference type="NCBIfam" id="NF003419">
    <property type="entry name" value="PRK04837.1"/>
    <property type="match status" value="1"/>
</dbReference>
<dbReference type="PANTHER" id="PTHR47959:SF10">
    <property type="entry name" value="ATP-DEPENDENT RNA HELICASE RHLB"/>
    <property type="match status" value="1"/>
</dbReference>
<dbReference type="PANTHER" id="PTHR47959">
    <property type="entry name" value="ATP-DEPENDENT RNA HELICASE RHLE-RELATED"/>
    <property type="match status" value="1"/>
</dbReference>
<dbReference type="Pfam" id="PF00270">
    <property type="entry name" value="DEAD"/>
    <property type="match status" value="1"/>
</dbReference>
<dbReference type="Pfam" id="PF00271">
    <property type="entry name" value="Helicase_C"/>
    <property type="match status" value="1"/>
</dbReference>
<dbReference type="SMART" id="SM00487">
    <property type="entry name" value="DEXDc"/>
    <property type="match status" value="1"/>
</dbReference>
<dbReference type="SMART" id="SM00490">
    <property type="entry name" value="HELICc"/>
    <property type="match status" value="1"/>
</dbReference>
<dbReference type="SUPFAM" id="SSF52540">
    <property type="entry name" value="P-loop containing nucleoside triphosphate hydrolases"/>
    <property type="match status" value="1"/>
</dbReference>
<dbReference type="PROSITE" id="PS00039">
    <property type="entry name" value="DEAD_ATP_HELICASE"/>
    <property type="match status" value="1"/>
</dbReference>
<dbReference type="PROSITE" id="PS51192">
    <property type="entry name" value="HELICASE_ATP_BIND_1"/>
    <property type="match status" value="1"/>
</dbReference>
<dbReference type="PROSITE" id="PS51194">
    <property type="entry name" value="HELICASE_CTER"/>
    <property type="match status" value="1"/>
</dbReference>
<dbReference type="PROSITE" id="PS51195">
    <property type="entry name" value="Q_MOTIF"/>
    <property type="match status" value="1"/>
</dbReference>
<proteinExistence type="inferred from homology"/>
<evidence type="ECO:0000255" key="1">
    <source>
        <dbReference type="HAMAP-Rule" id="MF_00661"/>
    </source>
</evidence>
<evidence type="ECO:0000256" key="2">
    <source>
        <dbReference type="SAM" id="MobiDB-lite"/>
    </source>
</evidence>
<accession>B1KQF6</accession>
<organism>
    <name type="scientific">Shewanella woodyi (strain ATCC 51908 / MS32)</name>
    <dbReference type="NCBI Taxonomy" id="392500"/>
    <lineage>
        <taxon>Bacteria</taxon>
        <taxon>Pseudomonadati</taxon>
        <taxon>Pseudomonadota</taxon>
        <taxon>Gammaproteobacteria</taxon>
        <taxon>Alteromonadales</taxon>
        <taxon>Shewanellaceae</taxon>
        <taxon>Shewanella</taxon>
    </lineage>
</organism>
<comment type="function">
    <text evidence="1">DEAD-box RNA helicase involved in RNA degradation. Has RNA-dependent ATPase activity and unwinds double-stranded RNA.</text>
</comment>
<comment type="catalytic activity">
    <reaction evidence="1">
        <text>ATP + H2O = ADP + phosphate + H(+)</text>
        <dbReference type="Rhea" id="RHEA:13065"/>
        <dbReference type="ChEBI" id="CHEBI:15377"/>
        <dbReference type="ChEBI" id="CHEBI:15378"/>
        <dbReference type="ChEBI" id="CHEBI:30616"/>
        <dbReference type="ChEBI" id="CHEBI:43474"/>
        <dbReference type="ChEBI" id="CHEBI:456216"/>
        <dbReference type="EC" id="3.6.4.13"/>
    </reaction>
</comment>
<comment type="subunit">
    <text evidence="1">Component of the RNA degradosome, which is a multiprotein complex involved in RNA processing and mRNA degradation.</text>
</comment>
<comment type="subcellular location">
    <subcellularLocation>
        <location evidence="1">Cytoplasm</location>
    </subcellularLocation>
</comment>
<comment type="similarity">
    <text evidence="1">Belongs to the DEAD box helicase family. RhlB subfamily.</text>
</comment>
<protein>
    <recommendedName>
        <fullName evidence="1">ATP-dependent RNA helicase RhlB</fullName>
        <ecNumber evidence="1">3.6.4.13</ecNumber>
    </recommendedName>
</protein>
<gene>
    <name evidence="1" type="primary">rhlB</name>
    <name type="ordered locus">Swoo_0514</name>
</gene>
<keyword id="KW-0067">ATP-binding</keyword>
<keyword id="KW-0963">Cytoplasm</keyword>
<keyword id="KW-0347">Helicase</keyword>
<keyword id="KW-0378">Hydrolase</keyword>
<keyword id="KW-0547">Nucleotide-binding</keyword>
<keyword id="KW-1185">Reference proteome</keyword>
<keyword id="KW-0694">RNA-binding</keyword>
<feature type="chain" id="PRO_1000131309" description="ATP-dependent RNA helicase RhlB">
    <location>
        <begin position="1"/>
        <end position="441"/>
    </location>
</feature>
<feature type="domain" description="Helicase ATP-binding" evidence="1">
    <location>
        <begin position="40"/>
        <end position="219"/>
    </location>
</feature>
<feature type="domain" description="Helicase C-terminal" evidence="1">
    <location>
        <begin position="243"/>
        <end position="390"/>
    </location>
</feature>
<feature type="region of interest" description="Disordered" evidence="2">
    <location>
        <begin position="401"/>
        <end position="441"/>
    </location>
</feature>
<feature type="short sequence motif" description="Q motif">
    <location>
        <begin position="9"/>
        <end position="37"/>
    </location>
</feature>
<feature type="short sequence motif" description="DEAD box">
    <location>
        <begin position="165"/>
        <end position="168"/>
    </location>
</feature>
<feature type="binding site" evidence="1">
    <location>
        <begin position="53"/>
        <end position="60"/>
    </location>
    <ligand>
        <name>ATP</name>
        <dbReference type="ChEBI" id="CHEBI:30616"/>
    </ligand>
</feature>